<accession>P0CZ76</accession>
<accession>P63598</accession>
<accession>Q99YQ9</accession>
<protein>
    <recommendedName>
        <fullName evidence="1">Shikimate dehydrogenase (NADP(+))</fullName>
        <shortName evidence="1">SDH</shortName>
        <ecNumber evidence="1">1.1.1.25</ecNumber>
    </recommendedName>
</protein>
<evidence type="ECO:0000255" key="1">
    <source>
        <dbReference type="HAMAP-Rule" id="MF_00222"/>
    </source>
</evidence>
<gene>
    <name evidence="1" type="primary">aroE</name>
    <name type="ordered locus">SpyM3_1284</name>
</gene>
<reference key="1">
    <citation type="journal article" date="2002" name="Proc. Natl. Acad. Sci. U.S.A.">
        <title>Genome sequence of a serotype M3 strain of group A Streptococcus: phage-encoded toxins, the high-virulence phenotype, and clone emergence.</title>
        <authorList>
            <person name="Beres S.B."/>
            <person name="Sylva G.L."/>
            <person name="Barbian K.D."/>
            <person name="Lei B."/>
            <person name="Hoff J.S."/>
            <person name="Mammarella N.D."/>
            <person name="Liu M.-Y."/>
            <person name="Smoot J.C."/>
            <person name="Porcella S.F."/>
            <person name="Parkins L.D."/>
            <person name="Campbell D.S."/>
            <person name="Smith T.M."/>
            <person name="McCormick J.K."/>
            <person name="Leung D.Y.M."/>
            <person name="Schlievert P.M."/>
            <person name="Musser J.M."/>
        </authorList>
    </citation>
    <scope>NUCLEOTIDE SEQUENCE [LARGE SCALE GENOMIC DNA]</scope>
    <source>
        <strain>ATCC BAA-595 / MGAS315</strain>
    </source>
</reference>
<dbReference type="EC" id="1.1.1.25" evidence="1"/>
<dbReference type="EMBL" id="AE014074">
    <property type="protein sequence ID" value="AAM79891.1"/>
    <property type="molecule type" value="Genomic_DNA"/>
</dbReference>
<dbReference type="RefSeq" id="WP_002983735.1">
    <property type="nucleotide sequence ID" value="NC_004070.1"/>
</dbReference>
<dbReference type="SMR" id="P0CZ76"/>
<dbReference type="KEGG" id="spg:SpyM3_1284"/>
<dbReference type="HOGENOM" id="CLU_044063_4_4_9"/>
<dbReference type="UniPathway" id="UPA00053">
    <property type="reaction ID" value="UER00087"/>
</dbReference>
<dbReference type="Proteomes" id="UP000000564">
    <property type="component" value="Chromosome"/>
</dbReference>
<dbReference type="GO" id="GO:0050661">
    <property type="term" value="F:NADP binding"/>
    <property type="evidence" value="ECO:0007669"/>
    <property type="project" value="InterPro"/>
</dbReference>
<dbReference type="GO" id="GO:0004764">
    <property type="term" value="F:shikimate 3-dehydrogenase (NADP+) activity"/>
    <property type="evidence" value="ECO:0007669"/>
    <property type="project" value="UniProtKB-UniRule"/>
</dbReference>
<dbReference type="GO" id="GO:0008652">
    <property type="term" value="P:amino acid biosynthetic process"/>
    <property type="evidence" value="ECO:0007669"/>
    <property type="project" value="UniProtKB-KW"/>
</dbReference>
<dbReference type="GO" id="GO:0009073">
    <property type="term" value="P:aromatic amino acid family biosynthetic process"/>
    <property type="evidence" value="ECO:0007669"/>
    <property type="project" value="UniProtKB-KW"/>
</dbReference>
<dbReference type="GO" id="GO:0009423">
    <property type="term" value="P:chorismate biosynthetic process"/>
    <property type="evidence" value="ECO:0007669"/>
    <property type="project" value="UniProtKB-UniRule"/>
</dbReference>
<dbReference type="GO" id="GO:0019632">
    <property type="term" value="P:shikimate metabolic process"/>
    <property type="evidence" value="ECO:0007669"/>
    <property type="project" value="InterPro"/>
</dbReference>
<dbReference type="CDD" id="cd01065">
    <property type="entry name" value="NAD_bind_Shikimate_DH"/>
    <property type="match status" value="1"/>
</dbReference>
<dbReference type="FunFam" id="3.40.50.10860:FF:000004">
    <property type="entry name" value="Quinate/shikimate dehydrogenase"/>
    <property type="match status" value="1"/>
</dbReference>
<dbReference type="FunFam" id="3.40.50.720:FF:000086">
    <property type="entry name" value="Quinate/shikimate dehydrogenase"/>
    <property type="match status" value="1"/>
</dbReference>
<dbReference type="Gene3D" id="3.40.50.10860">
    <property type="entry name" value="Leucine Dehydrogenase, chain A, domain 1"/>
    <property type="match status" value="1"/>
</dbReference>
<dbReference type="Gene3D" id="3.40.50.720">
    <property type="entry name" value="NAD(P)-binding Rossmann-like Domain"/>
    <property type="match status" value="1"/>
</dbReference>
<dbReference type="HAMAP" id="MF_00222">
    <property type="entry name" value="Shikimate_DH_AroE"/>
    <property type="match status" value="1"/>
</dbReference>
<dbReference type="InterPro" id="IPR046346">
    <property type="entry name" value="Aminoacid_DH-like_N_sf"/>
</dbReference>
<dbReference type="InterPro" id="IPR036291">
    <property type="entry name" value="NAD(P)-bd_dom_sf"/>
</dbReference>
<dbReference type="InterPro" id="IPR041121">
    <property type="entry name" value="SDH_C"/>
</dbReference>
<dbReference type="InterPro" id="IPR011342">
    <property type="entry name" value="Shikimate_DH"/>
</dbReference>
<dbReference type="InterPro" id="IPR013708">
    <property type="entry name" value="Shikimate_DH-bd_N"/>
</dbReference>
<dbReference type="InterPro" id="IPR022893">
    <property type="entry name" value="Shikimate_DH_fam"/>
</dbReference>
<dbReference type="NCBIfam" id="TIGR00507">
    <property type="entry name" value="aroE"/>
    <property type="match status" value="1"/>
</dbReference>
<dbReference type="NCBIfam" id="NF001319">
    <property type="entry name" value="PRK00258.3-3"/>
    <property type="match status" value="1"/>
</dbReference>
<dbReference type="PANTHER" id="PTHR21089:SF1">
    <property type="entry name" value="BIFUNCTIONAL 3-DEHYDROQUINATE DEHYDRATASE_SHIKIMATE DEHYDROGENASE, CHLOROPLASTIC"/>
    <property type="match status" value="1"/>
</dbReference>
<dbReference type="PANTHER" id="PTHR21089">
    <property type="entry name" value="SHIKIMATE DEHYDROGENASE"/>
    <property type="match status" value="1"/>
</dbReference>
<dbReference type="Pfam" id="PF18317">
    <property type="entry name" value="SDH_C"/>
    <property type="match status" value="1"/>
</dbReference>
<dbReference type="Pfam" id="PF08501">
    <property type="entry name" value="Shikimate_dh_N"/>
    <property type="match status" value="1"/>
</dbReference>
<dbReference type="SUPFAM" id="SSF53223">
    <property type="entry name" value="Aminoacid dehydrogenase-like, N-terminal domain"/>
    <property type="match status" value="1"/>
</dbReference>
<dbReference type="SUPFAM" id="SSF51735">
    <property type="entry name" value="NAD(P)-binding Rossmann-fold domains"/>
    <property type="match status" value="1"/>
</dbReference>
<feature type="chain" id="PRO_0000136041" description="Shikimate dehydrogenase (NADP(+))">
    <location>
        <begin position="1"/>
        <end position="292"/>
    </location>
</feature>
<feature type="active site" description="Proton acceptor" evidence="1">
    <location>
        <position position="73"/>
    </location>
</feature>
<feature type="binding site" evidence="1">
    <location>
        <begin position="22"/>
        <end position="24"/>
    </location>
    <ligand>
        <name>shikimate</name>
        <dbReference type="ChEBI" id="CHEBI:36208"/>
    </ligand>
</feature>
<feature type="binding site" evidence="1">
    <location>
        <position position="69"/>
    </location>
    <ligand>
        <name>shikimate</name>
        <dbReference type="ChEBI" id="CHEBI:36208"/>
    </ligand>
</feature>
<feature type="binding site" evidence="1">
    <location>
        <position position="94"/>
    </location>
    <ligand>
        <name>shikimate</name>
        <dbReference type="ChEBI" id="CHEBI:36208"/>
    </ligand>
</feature>
<feature type="binding site" evidence="1">
    <location>
        <position position="111"/>
    </location>
    <ligand>
        <name>shikimate</name>
        <dbReference type="ChEBI" id="CHEBI:36208"/>
    </ligand>
</feature>
<feature type="binding site" evidence="1">
    <location>
        <begin position="135"/>
        <end position="139"/>
    </location>
    <ligand>
        <name>NADP(+)</name>
        <dbReference type="ChEBI" id="CHEBI:58349"/>
    </ligand>
</feature>
<feature type="binding site" evidence="1">
    <location>
        <position position="236"/>
    </location>
    <ligand>
        <name>NADP(+)</name>
        <dbReference type="ChEBI" id="CHEBI:58349"/>
    </ligand>
</feature>
<feature type="binding site" evidence="1">
    <location>
        <position position="238"/>
    </location>
    <ligand>
        <name>shikimate</name>
        <dbReference type="ChEBI" id="CHEBI:36208"/>
    </ligand>
</feature>
<feature type="binding site" evidence="1">
    <location>
        <position position="260"/>
    </location>
    <ligand>
        <name>NADP(+)</name>
        <dbReference type="ChEBI" id="CHEBI:58349"/>
    </ligand>
</feature>
<proteinExistence type="inferred from homology"/>
<organism>
    <name type="scientific">Streptococcus pyogenes serotype M3 (strain ATCC BAA-595 / MGAS315)</name>
    <dbReference type="NCBI Taxonomy" id="198466"/>
    <lineage>
        <taxon>Bacteria</taxon>
        <taxon>Bacillati</taxon>
        <taxon>Bacillota</taxon>
        <taxon>Bacilli</taxon>
        <taxon>Lactobacillales</taxon>
        <taxon>Streptococcaceae</taxon>
        <taxon>Streptococcus</taxon>
    </lineage>
</organism>
<keyword id="KW-0028">Amino-acid biosynthesis</keyword>
<keyword id="KW-0057">Aromatic amino acid biosynthesis</keyword>
<keyword id="KW-0521">NADP</keyword>
<keyword id="KW-0560">Oxidoreductase</keyword>
<name>AROE_STRP3</name>
<sequence length="292" mass="31276">MSERLSGHTLLVSLLATPIRHSLSPKMHNEAYAKLGLDYAYLAFEVGTEQLADAVQGIRALGIRGSNVSMPNKEAILPLLDDLSPAAELVGAVNTVVNKDGKGHLVGHITDGIGALRALADEGVSVKNKIITLAGVGGAGKAIAVQLAFDGAKEVRLFNRQATRLSSVQKLVTKLNQLTRTKVTLQDLEDQTAFKEAIRESHLFIDATSVGMKPLENLSLITDPELIRPDLVVFDIVYSPAETKLLAFARQHGAQKVINGLGMVLYQGAEAFKLITGQDMPVDAIKPLLGDE</sequence>
<comment type="function">
    <text evidence="1">Involved in the biosynthesis of the chorismate, which leads to the biosynthesis of aromatic amino acids. Catalyzes the reversible NADPH linked reduction of 3-dehydroshikimate (DHSA) to yield shikimate (SA).</text>
</comment>
<comment type="catalytic activity">
    <reaction evidence="1">
        <text>shikimate + NADP(+) = 3-dehydroshikimate + NADPH + H(+)</text>
        <dbReference type="Rhea" id="RHEA:17737"/>
        <dbReference type="ChEBI" id="CHEBI:15378"/>
        <dbReference type="ChEBI" id="CHEBI:16630"/>
        <dbReference type="ChEBI" id="CHEBI:36208"/>
        <dbReference type="ChEBI" id="CHEBI:57783"/>
        <dbReference type="ChEBI" id="CHEBI:58349"/>
        <dbReference type="EC" id="1.1.1.25"/>
    </reaction>
</comment>
<comment type="pathway">
    <text evidence="1">Metabolic intermediate biosynthesis; chorismate biosynthesis; chorismate from D-erythrose 4-phosphate and phosphoenolpyruvate: step 4/7.</text>
</comment>
<comment type="subunit">
    <text evidence="1">Homodimer.</text>
</comment>
<comment type="similarity">
    <text evidence="1">Belongs to the shikimate dehydrogenase family.</text>
</comment>